<organism>
    <name type="scientific">Pestalotiopsis fici (strain W106-1 / CGMCC3.15140)</name>
    <dbReference type="NCBI Taxonomy" id="1229662"/>
    <lineage>
        <taxon>Eukaryota</taxon>
        <taxon>Fungi</taxon>
        <taxon>Dikarya</taxon>
        <taxon>Ascomycota</taxon>
        <taxon>Pezizomycotina</taxon>
        <taxon>Sordariomycetes</taxon>
        <taxon>Xylariomycetidae</taxon>
        <taxon>Amphisphaeriales</taxon>
        <taxon>Sporocadaceae</taxon>
        <taxon>Pestalotiopsis</taxon>
    </lineage>
</organism>
<name>PTAE_PESFW</name>
<dbReference type="EC" id="1.-.-.-" evidence="7"/>
<dbReference type="EMBL" id="KC145148">
    <property type="protein sequence ID" value="AGO59042.1"/>
    <property type="status" value="ALT_SEQ"/>
    <property type="molecule type" value="Genomic_DNA"/>
</dbReference>
<dbReference type="EMBL" id="KI912116">
    <property type="protein sequence ID" value="ETS76954.1"/>
    <property type="molecule type" value="Genomic_DNA"/>
</dbReference>
<dbReference type="RefSeq" id="XP_007837600.1">
    <property type="nucleotide sequence ID" value="XM_007839409.1"/>
</dbReference>
<dbReference type="SMR" id="A0A067XMP0"/>
<dbReference type="GlyCosmos" id="A0A067XMP0">
    <property type="glycosylation" value="10 sites, No reported glycans"/>
</dbReference>
<dbReference type="GeneID" id="19275841"/>
<dbReference type="KEGG" id="pfy:PFICI_10828"/>
<dbReference type="eggNOG" id="KOG1263">
    <property type="taxonomic scope" value="Eukaryota"/>
</dbReference>
<dbReference type="InParanoid" id="A0A067XMP0"/>
<dbReference type="OMA" id="CKEGIVM"/>
<dbReference type="OrthoDB" id="2121828at2759"/>
<dbReference type="Proteomes" id="UP000030651">
    <property type="component" value="Unassembled WGS sequence"/>
</dbReference>
<dbReference type="GO" id="GO:0005507">
    <property type="term" value="F:copper ion binding"/>
    <property type="evidence" value="ECO:0007669"/>
    <property type="project" value="InterPro"/>
</dbReference>
<dbReference type="GO" id="GO:0016491">
    <property type="term" value="F:oxidoreductase activity"/>
    <property type="evidence" value="ECO:0007669"/>
    <property type="project" value="UniProtKB-KW"/>
</dbReference>
<dbReference type="CDD" id="cd13854">
    <property type="entry name" value="CuRO_1_MaLCC_like"/>
    <property type="match status" value="1"/>
</dbReference>
<dbReference type="CDD" id="cd13880">
    <property type="entry name" value="CuRO_2_MaLCC_like"/>
    <property type="match status" value="1"/>
</dbReference>
<dbReference type="CDD" id="cd13901">
    <property type="entry name" value="CuRO_3_MaLCC_like"/>
    <property type="match status" value="1"/>
</dbReference>
<dbReference type="FunFam" id="2.60.40.420:FF:000021">
    <property type="entry name" value="Extracellular dihydrogeodin oxidase/laccase"/>
    <property type="match status" value="1"/>
</dbReference>
<dbReference type="FunFam" id="2.60.40.420:FF:000045">
    <property type="entry name" value="Laccase 2"/>
    <property type="match status" value="1"/>
</dbReference>
<dbReference type="Gene3D" id="2.60.40.420">
    <property type="entry name" value="Cupredoxins - blue copper proteins"/>
    <property type="match status" value="3"/>
</dbReference>
<dbReference type="InterPro" id="IPR011707">
    <property type="entry name" value="Cu-oxidase-like_N"/>
</dbReference>
<dbReference type="InterPro" id="IPR001117">
    <property type="entry name" value="Cu-oxidase_2nd"/>
</dbReference>
<dbReference type="InterPro" id="IPR011706">
    <property type="entry name" value="Cu-oxidase_C"/>
</dbReference>
<dbReference type="InterPro" id="IPR045087">
    <property type="entry name" value="Cu-oxidase_fam"/>
</dbReference>
<dbReference type="InterPro" id="IPR008972">
    <property type="entry name" value="Cupredoxin"/>
</dbReference>
<dbReference type="PANTHER" id="PTHR11709">
    <property type="entry name" value="MULTI-COPPER OXIDASE"/>
    <property type="match status" value="1"/>
</dbReference>
<dbReference type="PANTHER" id="PTHR11709:SF71">
    <property type="entry name" value="OXIDOREDUCTASE TPCJ"/>
    <property type="match status" value="1"/>
</dbReference>
<dbReference type="Pfam" id="PF00394">
    <property type="entry name" value="Cu-oxidase"/>
    <property type="match status" value="1"/>
</dbReference>
<dbReference type="Pfam" id="PF07731">
    <property type="entry name" value="Cu-oxidase_2"/>
    <property type="match status" value="1"/>
</dbReference>
<dbReference type="Pfam" id="PF07732">
    <property type="entry name" value="Cu-oxidase_3"/>
    <property type="match status" value="1"/>
</dbReference>
<dbReference type="SUPFAM" id="SSF49503">
    <property type="entry name" value="Cupredoxins"/>
    <property type="match status" value="3"/>
</dbReference>
<proteinExistence type="evidence at transcript level"/>
<feature type="signal peptide" evidence="1">
    <location>
        <begin position="1"/>
        <end position="20"/>
    </location>
</feature>
<feature type="chain" id="PRO_0000443050" description="Oxidoreductase ptaE">
    <location>
        <begin position="21"/>
        <end position="610"/>
    </location>
</feature>
<feature type="domain" description="Plastocyanin-like 1" evidence="1">
    <location>
        <begin position="67"/>
        <end position="181"/>
    </location>
</feature>
<feature type="domain" description="Plastocyanin-like 2" evidence="1">
    <location>
        <begin position="191"/>
        <end position="344"/>
    </location>
</feature>
<feature type="domain" description="Plastocyanin-like 3" evidence="1">
    <location>
        <begin position="425"/>
        <end position="568"/>
    </location>
</feature>
<feature type="glycosylation site" description="N-linked (GlcNAc...) asparagine" evidence="2">
    <location>
        <position position="105"/>
    </location>
</feature>
<feature type="glycosylation site" description="N-linked (GlcNAc...) asparagine" evidence="2">
    <location>
        <position position="111"/>
    </location>
</feature>
<feature type="glycosylation site" description="N-linked (GlcNAc...) asparagine" evidence="2">
    <location>
        <position position="262"/>
    </location>
</feature>
<feature type="glycosylation site" description="N-linked (GlcNAc...) asparagine" evidence="2">
    <location>
        <position position="277"/>
    </location>
</feature>
<feature type="glycosylation site" description="N-linked (GlcNAc...) asparagine" evidence="2">
    <location>
        <position position="330"/>
    </location>
</feature>
<feature type="glycosylation site" description="N-linked (GlcNAc...) asparagine" evidence="2">
    <location>
        <position position="356"/>
    </location>
</feature>
<feature type="glycosylation site" description="N-linked (GlcNAc...) asparagine" evidence="2">
    <location>
        <position position="401"/>
    </location>
</feature>
<feature type="glycosylation site" description="N-linked (GlcNAc...) asparagine" evidence="2">
    <location>
        <position position="409"/>
    </location>
</feature>
<feature type="glycosylation site" description="N-linked (GlcNAc...) asparagine" evidence="2">
    <location>
        <position position="427"/>
    </location>
</feature>
<feature type="glycosylation site" description="N-linked (GlcNAc...) asparagine" evidence="2">
    <location>
        <position position="602"/>
    </location>
</feature>
<keyword id="KW-0186">Copper</keyword>
<keyword id="KW-0325">Glycoprotein</keyword>
<keyword id="KW-0479">Metal-binding</keyword>
<keyword id="KW-0560">Oxidoreductase</keyword>
<keyword id="KW-1185">Reference proteome</keyword>
<keyword id="KW-0677">Repeat</keyword>
<keyword id="KW-0732">Signal</keyword>
<reference key="1">
    <citation type="journal article" date="2014" name="ChemBioChem">
        <title>Identification of the first diphenyl ether gene cluster for pestheic acid biosynthesis in plant endophyte Pestalotiopsis fici.</title>
        <authorList>
            <person name="Xu X."/>
            <person name="Liu L."/>
            <person name="Zhang F."/>
            <person name="Wang W."/>
            <person name="Li J."/>
            <person name="Guo L."/>
            <person name="Che Y."/>
            <person name="Liu G."/>
        </authorList>
    </citation>
    <scope>NUCLEOTIDE SEQUENCE [GENOMIC DNA]</scope>
    <scope>FUNCTION</scope>
    <scope>DISRUPTION PHENOTYPE</scope>
    <scope>INDUCTION</scope>
    <source>
        <strain>W106-1 / CGMCC3.15140</strain>
    </source>
</reference>
<reference key="2">
    <citation type="journal article" date="2015" name="BMC Genomics">
        <title>Genomic and transcriptomic analysis of the endophytic fungus Pestalotiopsis fici reveals its lifestyle and high potential for synthesis of natural products.</title>
        <authorList>
            <person name="Wang X."/>
            <person name="Zhang X."/>
            <person name="Liu L."/>
            <person name="Xiang M."/>
            <person name="Wang W."/>
            <person name="Sun X."/>
            <person name="Che Y."/>
            <person name="Guo L."/>
            <person name="Liu G."/>
            <person name="Guo L."/>
            <person name="Wang C."/>
            <person name="Yin W.B."/>
            <person name="Stadler M."/>
            <person name="Zhang X."/>
            <person name="Liu X."/>
        </authorList>
    </citation>
    <scope>NUCLEOTIDE SEQUENCE [LARGE SCALE GENOMIC DNA]</scope>
    <scope>INDUCTION</scope>
    <source>
        <strain>W106-1 / CGMCC3.15140</strain>
    </source>
</reference>
<evidence type="ECO:0000255" key="1"/>
<evidence type="ECO:0000255" key="2">
    <source>
        <dbReference type="PROSITE-ProRule" id="PRU00498"/>
    </source>
</evidence>
<evidence type="ECO:0000269" key="3">
    <source>
    </source>
</evidence>
<evidence type="ECO:0000269" key="4">
    <source>
    </source>
</evidence>
<evidence type="ECO:0000303" key="5">
    <source>
    </source>
</evidence>
<evidence type="ECO:0000305" key="6"/>
<evidence type="ECO:0000305" key="7">
    <source>
    </source>
</evidence>
<comment type="function">
    <text evidence="3">Oxidoreductase; part of the gene cluster that mediates the biosynthesis of pestheic acid, a diphenyl ether which is a biosynthetic precursor of the unique chloropupukeananes (PubMed:24302702). The biosynthesis initiates from condensation of acetate and malonate units catalyzed by the non-reducing PKS ptaA (PubMed:24302702). As the ptaA protein is TE/CLC domain-deficient, hydrolysis and Claisen cyclization of the polyketide could be catalyzed by ptaB containing a beta-lactamase domain (PubMed:24302702). The ptaB protein might hydrolyze the thioester bond between the ACP of ptaA and the intermediate to release atrochrysone carboxylic acid, which is spontaneously dehydrated to form endocrocin anthrone (PubMed:24302702). Endocrocin anthrone is then converted to endocrocin, catalyzed by the anthrone oxygenase ptaC (PubMed:24302702). Spontaneous decarboxylation of endocrocin occurs to generate emodin (PubMed:24302702). An O-methyltransferase (ptaH or ptaI) could methylate emodin to form physcion (PubMed:24302702). PtaJ could then catalyze the oxidative cleavage of physcion, and rotation of the intermediate could then afford desmethylisosulochrin (PubMed:24302702). PtaF, a putative NADH-dependent oxidoreductase, might also participate in the oxidative cleavage step (PubMed:24302702). Desmethylisosulochrin is then transformed by another O-methyltransferase (ptaH or ptaI) to form isosulochrin (PubMed:24302702). Chlorination of isosulochrin by ptaM in the cyclohexadienone B ring then produces chloroisosulochrin (PubMed:24302702). PtaE is responsible for the oxidative coupling reactions of both benzophenones isosulouchrin and chloroisosulochrin to RES-1214-1 and pestheic acid respectively, regardless of chlorination.</text>
</comment>
<comment type="pathway">
    <text evidence="3">Secondary metabolite biosynthesis.</text>
</comment>
<comment type="induction">
    <text evidence="3 4">The cluster is expressed in rice fermentation medium (PubMed:25623211). Expression is correlated with the production of pestheic acid (PubMed:24302702). Three regulators are located in the cluster (ptaR1, ptaR2 and ptaR3), suggesting that the production of pestheic acid is controlled by a complex regulatory mechanism (PubMed:24302702).</text>
</comment>
<comment type="disruption phenotype">
    <text evidence="3">Abolishes the production of pestheic acid and RES-1214-1, but accumulates isosulochrin and chloroisosulochrin (PubMed:24302702).</text>
</comment>
<comment type="similarity">
    <text evidence="6">Belongs to the multicopper oxidase family.</text>
</comment>
<comment type="sequence caution" evidence="6">
    <conflict type="erroneous gene model prediction">
        <sequence resource="EMBL-CDS" id="AGO59042"/>
    </conflict>
</comment>
<sequence>MFQSILFLAFYGRPVFGSAAARDYACVNTAESRDCWKDGFNIETDYYGKEEAPEGKLVEYELTLSQQIISPDGYEMLGMVVNGQYPGPTIEADWGDTLRITVKNNFTENYNGTAVHWHGIRQKETNWLDGVPGVTQCPITPGDSQVYEFRVTQYGTSWYHSHYSLQYSNGAYGPIVIHGPSSANWDVDLGPWLLSDWYHDDAFALDHVGITTNRAAIPKSSLINGKGYYECDPTNDAKCTGTRDYYEVVLKQGTKYKFGIINTSTILTYTFWIDGHNFTIIAIDFVPIEPLTVDTLNVGIGQRYEIIIETNPDFDDDSSFWMHAQYCFINQTDIVDDKVGIVRYESAGSSDPPYINKSDYHLNFGCADPKPESLVPILKQQVGAQANPLAAEDYFRVGLGNFTWPDATNSTGSVFLWFLQKLPLYVNWSEPSVKKLTIDETADFPPNSRPIELDYETGQWVYFVIESDWDPAGAVDQYGQEIRVEPSVHPFHLHGHDFLILAQGLGKFTSDIQPNLDNPPRRDTVDVEPLGYVWIAFQIDNPGAWLFHCHIAFHSSDGIAIQFLEQPSKLKPIMEEAGVLGDFADRCNKWDDWYQAVNIPHNATQADSGV</sequence>
<protein>
    <recommendedName>
        <fullName evidence="5">Oxidoreductase ptaE</fullName>
        <ecNumber evidence="7">1.-.-.-</ecNumber>
    </recommendedName>
    <alternativeName>
        <fullName evidence="5">Dihydrogeodin oxidase</fullName>
        <shortName evidence="5">DHGO</shortName>
    </alternativeName>
    <alternativeName>
        <fullName evidence="5">Pestheic acid biosynthesis cluster protein E</fullName>
    </alternativeName>
</protein>
<gene>
    <name evidence="5" type="primary">ptaE</name>
    <name type="ORF">PFICI_10828</name>
</gene>
<accession>A0A067XMP0</accession>
<accession>W3WT07</accession>